<name>SECF_THET1</name>
<proteinExistence type="inferred from homology"/>
<gene>
    <name evidence="1" type="primary">secF</name>
    <name type="ordered locus">Tter_0080</name>
</gene>
<organism>
    <name type="scientific">Thermobaculum terrenum (strain ATCC BAA-798 / CCMEE 7001 / YNP1)</name>
    <dbReference type="NCBI Taxonomy" id="525904"/>
    <lineage>
        <taxon>Bacteria</taxon>
        <taxon>Bacillati</taxon>
        <taxon>Chloroflexota</taxon>
        <taxon>Chloroflexia</taxon>
        <taxon>Candidatus Thermobaculales</taxon>
        <taxon>Candidatus Thermobaculaceae</taxon>
        <taxon>Thermobaculum</taxon>
    </lineage>
</organism>
<reference key="1">
    <citation type="journal article" date="2010" name="Stand. Genomic Sci.">
        <title>Complete genome sequence of 'Thermobaculum terrenum' type strain (YNP1).</title>
        <authorList>
            <person name="Kiss H."/>
            <person name="Cleland D."/>
            <person name="Lapidus A."/>
            <person name="Lucas S."/>
            <person name="Del Rio T.G."/>
            <person name="Nolan M."/>
            <person name="Tice H."/>
            <person name="Han C."/>
            <person name="Goodwin L."/>
            <person name="Pitluck S."/>
            <person name="Liolios K."/>
            <person name="Ivanova N."/>
            <person name="Mavromatis K."/>
            <person name="Ovchinnikova G."/>
            <person name="Pati A."/>
            <person name="Chen A."/>
            <person name="Palaniappan K."/>
            <person name="Land M."/>
            <person name="Hauser L."/>
            <person name="Chang Y.J."/>
            <person name="Jeffries C.D."/>
            <person name="Lu M."/>
            <person name="Brettin T."/>
            <person name="Detter J.C."/>
            <person name="Goeker M."/>
            <person name="Tindall B.J."/>
            <person name="Beck B."/>
            <person name="McDermott T.R."/>
            <person name="Woyke T."/>
            <person name="Bristow J."/>
            <person name="Eisen J.A."/>
            <person name="Markowitz V."/>
            <person name="Hugenholtz P."/>
            <person name="Kyrpides N.C."/>
            <person name="Klenk H.P."/>
            <person name="Cheng J.F."/>
        </authorList>
    </citation>
    <scope>NUCLEOTIDE SEQUENCE [LARGE SCALE GENOMIC DNA]</scope>
    <source>
        <strain>ATCC BAA-798 / CCMEE 7001 / YNP1</strain>
    </source>
</reference>
<feature type="chain" id="PRO_0000412704" description="Protein translocase subunit SecF">
    <location>
        <begin position="1"/>
        <end position="317"/>
    </location>
</feature>
<feature type="transmembrane region" description="Helical" evidence="1">
    <location>
        <begin position="11"/>
        <end position="31"/>
    </location>
</feature>
<feature type="transmembrane region" description="Helical" evidence="1">
    <location>
        <begin position="135"/>
        <end position="155"/>
    </location>
</feature>
<feature type="transmembrane region" description="Helical" evidence="1">
    <location>
        <begin position="166"/>
        <end position="186"/>
    </location>
</feature>
<feature type="transmembrane region" description="Helical" evidence="1">
    <location>
        <begin position="197"/>
        <end position="217"/>
    </location>
</feature>
<feature type="transmembrane region" description="Helical" evidence="1">
    <location>
        <begin position="244"/>
        <end position="266"/>
    </location>
</feature>
<feature type="transmembrane region" description="Helical" evidence="1">
    <location>
        <begin position="276"/>
        <end position="298"/>
    </location>
</feature>
<dbReference type="EMBL" id="CP001825">
    <property type="protein sequence ID" value="ACZ41002.1"/>
    <property type="molecule type" value="Genomic_DNA"/>
</dbReference>
<dbReference type="RefSeq" id="WP_012874037.1">
    <property type="nucleotide sequence ID" value="NC_013525.1"/>
</dbReference>
<dbReference type="SMR" id="D1CDJ6"/>
<dbReference type="STRING" id="525904.Tter_0080"/>
<dbReference type="KEGG" id="ttr:Tter_0080"/>
<dbReference type="eggNOG" id="COG0341">
    <property type="taxonomic scope" value="Bacteria"/>
</dbReference>
<dbReference type="HOGENOM" id="CLU_050012_0_0_0"/>
<dbReference type="OrthoDB" id="9805019at2"/>
<dbReference type="Proteomes" id="UP000000323">
    <property type="component" value="Chromosome 1"/>
</dbReference>
<dbReference type="GO" id="GO:0005886">
    <property type="term" value="C:plasma membrane"/>
    <property type="evidence" value="ECO:0007669"/>
    <property type="project" value="UniProtKB-SubCell"/>
</dbReference>
<dbReference type="GO" id="GO:0015450">
    <property type="term" value="F:protein-transporting ATPase activity"/>
    <property type="evidence" value="ECO:0007669"/>
    <property type="project" value="InterPro"/>
</dbReference>
<dbReference type="GO" id="GO:0065002">
    <property type="term" value="P:intracellular protein transmembrane transport"/>
    <property type="evidence" value="ECO:0007669"/>
    <property type="project" value="UniProtKB-UniRule"/>
</dbReference>
<dbReference type="GO" id="GO:0006605">
    <property type="term" value="P:protein targeting"/>
    <property type="evidence" value="ECO:0007669"/>
    <property type="project" value="UniProtKB-UniRule"/>
</dbReference>
<dbReference type="GO" id="GO:0043952">
    <property type="term" value="P:protein transport by the Sec complex"/>
    <property type="evidence" value="ECO:0007669"/>
    <property type="project" value="UniProtKB-UniRule"/>
</dbReference>
<dbReference type="Gene3D" id="3.30.70.2040">
    <property type="match status" value="1"/>
</dbReference>
<dbReference type="Gene3D" id="1.20.1640.10">
    <property type="entry name" value="Multidrug efflux transporter AcrB transmembrane domain"/>
    <property type="match status" value="1"/>
</dbReference>
<dbReference type="HAMAP" id="MF_01464_B">
    <property type="entry name" value="SecF_B"/>
    <property type="match status" value="1"/>
</dbReference>
<dbReference type="InterPro" id="IPR022813">
    <property type="entry name" value="SecD/SecF_arch_bac"/>
</dbReference>
<dbReference type="InterPro" id="IPR022645">
    <property type="entry name" value="SecD/SecF_bac"/>
</dbReference>
<dbReference type="InterPro" id="IPR022646">
    <property type="entry name" value="SecD/SecF_CS"/>
</dbReference>
<dbReference type="InterPro" id="IPR048634">
    <property type="entry name" value="SecD_SecF_C"/>
</dbReference>
<dbReference type="InterPro" id="IPR005665">
    <property type="entry name" value="SecF_bac"/>
</dbReference>
<dbReference type="NCBIfam" id="TIGR00966">
    <property type="entry name" value="transloc_SecF"/>
    <property type="match status" value="1"/>
</dbReference>
<dbReference type="PANTHER" id="PTHR30081:SF8">
    <property type="entry name" value="PROTEIN TRANSLOCASE SUBUNIT SECF"/>
    <property type="match status" value="1"/>
</dbReference>
<dbReference type="PANTHER" id="PTHR30081">
    <property type="entry name" value="PROTEIN-EXPORT MEMBRANE PROTEIN SEC"/>
    <property type="match status" value="1"/>
</dbReference>
<dbReference type="Pfam" id="PF07549">
    <property type="entry name" value="Sec_GG"/>
    <property type="match status" value="1"/>
</dbReference>
<dbReference type="Pfam" id="PF02355">
    <property type="entry name" value="SecD_SecF_C"/>
    <property type="match status" value="1"/>
</dbReference>
<dbReference type="PRINTS" id="PR01755">
    <property type="entry name" value="SECFTRNLCASE"/>
</dbReference>
<dbReference type="SUPFAM" id="SSF82866">
    <property type="entry name" value="Multidrug efflux transporter AcrB transmembrane domain"/>
    <property type="match status" value="1"/>
</dbReference>
<comment type="function">
    <text evidence="1">Part of the Sec protein translocase complex. Interacts with the SecYEG preprotein conducting channel. SecDF uses the proton motive force (PMF) to complete protein translocation after the ATP-dependent function of SecA.</text>
</comment>
<comment type="subunit">
    <text evidence="1">Forms a complex with SecD. Part of the essential Sec protein translocation apparatus which comprises SecA, SecYEG and auxiliary proteins SecDF. Other proteins may also be involved.</text>
</comment>
<comment type="subcellular location">
    <subcellularLocation>
        <location evidence="1">Cell membrane</location>
        <topology evidence="1">Multi-pass membrane protein</topology>
    </subcellularLocation>
</comment>
<comment type="similarity">
    <text evidence="1">Belongs to the SecD/SecF family. SecF subfamily.</text>
</comment>
<accession>D1CDJ6</accession>
<protein>
    <recommendedName>
        <fullName>Protein translocase subunit SecF</fullName>
    </recommendedName>
</protein>
<sequence>MIDIVRWRYAFYLLSLLIIIPGTIYLLLFGLRLGIDFEGGTFWQIQFEKPVRIEDVRSALAQAGYNEAFVQSFGQQSNTAQGTVTRGVSMRLPEIKENSPEKAKLEQILKSRFGNYEELVFTSVGPAVGREIRNRSIVAIALASLGILGYIAFAFRKVSHPFRYGICAIIAMLHDVLVVVGIFAILGKHFGVEIDALFVTALLTVIGFSVHDTIVVFDRIRENQLRRYGESFEQIVNISLLQTLVRSVNTSMTVIFTLLALYFFGGTTIKHFVLALLIGIVSGTYSSIFNASLLLVSWENKDFLRIFRRTEPEAAAT</sequence>
<evidence type="ECO:0000255" key="1">
    <source>
        <dbReference type="HAMAP-Rule" id="MF_01464"/>
    </source>
</evidence>
<keyword id="KW-1003">Cell membrane</keyword>
<keyword id="KW-0472">Membrane</keyword>
<keyword id="KW-0653">Protein transport</keyword>
<keyword id="KW-1185">Reference proteome</keyword>
<keyword id="KW-0811">Translocation</keyword>
<keyword id="KW-0812">Transmembrane</keyword>
<keyword id="KW-1133">Transmembrane helix</keyword>
<keyword id="KW-0813">Transport</keyword>